<accession>P0DXU1</accession>
<reference key="1">
    <citation type="journal article" date="2024" name="J. Biol. Chem.">
        <title>Peptide toxins that target vertebrate voltage-gated sodium channels underly the painful stings of harvester ants.</title>
        <authorList>
            <person name="Robinson S.D."/>
            <person name="Deuis J.R."/>
            <person name="Niu P."/>
            <person name="Touchard A."/>
            <person name="Mueller A."/>
            <person name="Schendel V."/>
            <person name="Brinkwirth N."/>
            <person name="King G.F."/>
            <person name="Vetter I."/>
            <person name="Schmidt J.O."/>
        </authorList>
    </citation>
    <scope>NUCLEOTIDE SEQUENCE [MRNA]</scope>
    <source>
        <tissue>Venom gland</tissue>
    </source>
</reference>
<proteinExistence type="inferred from homology"/>
<feature type="signal peptide" evidence="2">
    <location>
        <begin position="1"/>
        <end position="25"/>
    </location>
</feature>
<feature type="propeptide" id="PRO_0000461265" evidence="1">
    <location>
        <begin position="26"/>
        <end position="37"/>
    </location>
</feature>
<feature type="peptide" id="PRO_0000461266" description="Myrmicitoxin(1)-Pr5a" evidence="1">
    <location>
        <begin position="38"/>
        <end position="65"/>
    </location>
</feature>
<feature type="modified residue" description="Valine amide" evidence="1">
    <location>
        <position position="65"/>
    </location>
</feature>
<dbReference type="EMBL" id="OR128480">
    <property type="protein sequence ID" value="WMI02518.1"/>
    <property type="molecule type" value="mRNA"/>
</dbReference>
<dbReference type="SMR" id="P0DXU1"/>
<dbReference type="GO" id="GO:0005576">
    <property type="term" value="C:extracellular region"/>
    <property type="evidence" value="ECO:0007669"/>
    <property type="project" value="UniProtKB-SubCell"/>
</dbReference>
<dbReference type="GO" id="GO:0090729">
    <property type="term" value="F:toxin activity"/>
    <property type="evidence" value="ECO:0007669"/>
    <property type="project" value="UniProtKB-KW"/>
</dbReference>
<evidence type="ECO:0000250" key="1">
    <source>
        <dbReference type="UniProtKB" id="P0DRD5"/>
    </source>
</evidence>
<evidence type="ECO:0000255" key="2"/>
<evidence type="ECO:0000303" key="3">
    <source>
    </source>
</evidence>
<evidence type="ECO:0000305" key="4"/>
<evidence type="ECO:0000305" key="5">
    <source>
    </source>
</evidence>
<keyword id="KW-0027">Amidation</keyword>
<keyword id="KW-0528">Neurotoxin</keyword>
<keyword id="KW-0964">Secreted</keyword>
<keyword id="KW-0732">Signal</keyword>
<keyword id="KW-0800">Toxin</keyword>
<protein>
    <recommendedName>
        <fullName evidence="3">Myrmicitoxin(1)-Pr5a</fullName>
        <shortName evidence="3">MYRTX(1)-Pr5a</shortName>
    </recommendedName>
</protein>
<comment type="function">
    <text evidence="1">Toxin that causes a rapid and irreversible paralysis when intrathoracically injected into insects (blowflies). Does not cause spontaneous nocifensive behaviors by intraplantar injection in mice. Exhibits hemolytic and cytotoxic activities on HEK293 cells.</text>
</comment>
<comment type="subcellular location">
    <subcellularLocation>
        <location evidence="5">Secreted</location>
    </subcellularLocation>
</comment>
<comment type="tissue specificity">
    <text evidence="5">Expressed by the venom gland.</text>
</comment>
<comment type="similarity">
    <text evidence="4">Belongs to the formicidae venom clade 3 family.</text>
</comment>
<sequence>MRSLYLSFSLTIIFVLVIMHAEAKAISEPNAIAEADPRFLNILKTIGKILLPIIPTVAEKIKEKVG</sequence>
<name>TX5A_POGRU</name>
<organism>
    <name type="scientific">Pogonomyrmex rugosus</name>
    <name type="common">Desert harvester ant</name>
    <dbReference type="NCBI Taxonomy" id="144042"/>
    <lineage>
        <taxon>Eukaryota</taxon>
        <taxon>Metazoa</taxon>
        <taxon>Ecdysozoa</taxon>
        <taxon>Arthropoda</taxon>
        <taxon>Hexapoda</taxon>
        <taxon>Insecta</taxon>
        <taxon>Pterygota</taxon>
        <taxon>Neoptera</taxon>
        <taxon>Endopterygota</taxon>
        <taxon>Hymenoptera</taxon>
        <taxon>Apocrita</taxon>
        <taxon>Aculeata</taxon>
        <taxon>Formicoidea</taxon>
        <taxon>Formicidae</taxon>
        <taxon>Myrmicinae</taxon>
        <taxon>Pogonomyrmex</taxon>
    </lineage>
</organism>